<gene>
    <name type="primary">AGA</name>
</gene>
<name>ASPG_HUMAN</name>
<protein>
    <recommendedName>
        <fullName>N(4)-(beta-N-acetylglucosaminyl)-L-asparaginase</fullName>
        <ecNumber evidence="6 8 10">3.5.1.26</ecNumber>
    </recommendedName>
    <alternativeName>
        <fullName>Aspartylglucosaminidase</fullName>
    </alternativeName>
    <alternativeName>
        <fullName>Glycosylasparaginase</fullName>
    </alternativeName>
    <alternativeName>
        <fullName>N4-(N-acetyl-beta-glucosaminyl)-L-asparagine amidase</fullName>
    </alternativeName>
    <component>
        <recommendedName>
            <fullName>Glycosylasparaginase alpha chain</fullName>
        </recommendedName>
    </component>
    <component>
        <recommendedName>
            <fullName>Glycosylasparaginase beta chain</fullName>
        </recommendedName>
    </component>
</protein>
<dbReference type="EC" id="3.5.1.26" evidence="6 8 10"/>
<dbReference type="EMBL" id="X55762">
    <property type="protein sequence ID" value="CAA39288.1"/>
    <property type="molecule type" value="mRNA"/>
</dbReference>
<dbReference type="EMBL" id="X55330">
    <property type="protein sequence ID" value="CAA39029.1"/>
    <property type="molecule type" value="mRNA"/>
</dbReference>
<dbReference type="EMBL" id="U21281">
    <property type="protein sequence ID" value="AAB60655.1"/>
    <property type="molecule type" value="Genomic_DNA"/>
</dbReference>
<dbReference type="EMBL" id="U21273">
    <property type="protein sequence ID" value="AAB60655.1"/>
    <property type="status" value="JOINED"/>
    <property type="molecule type" value="Genomic_DNA"/>
</dbReference>
<dbReference type="EMBL" id="U21274">
    <property type="protein sequence ID" value="AAB60655.1"/>
    <property type="status" value="JOINED"/>
    <property type="molecule type" value="Genomic_DNA"/>
</dbReference>
<dbReference type="EMBL" id="U21275">
    <property type="protein sequence ID" value="AAB60655.1"/>
    <property type="status" value="JOINED"/>
    <property type="molecule type" value="Genomic_DNA"/>
</dbReference>
<dbReference type="EMBL" id="U21277">
    <property type="protein sequence ID" value="AAB60655.1"/>
    <property type="status" value="JOINED"/>
    <property type="molecule type" value="Genomic_DNA"/>
</dbReference>
<dbReference type="EMBL" id="U21278">
    <property type="protein sequence ID" value="AAB60655.1"/>
    <property type="status" value="JOINED"/>
    <property type="molecule type" value="Genomic_DNA"/>
</dbReference>
<dbReference type="EMBL" id="U21279">
    <property type="protein sequence ID" value="AAB60655.1"/>
    <property type="status" value="JOINED"/>
    <property type="molecule type" value="Genomic_DNA"/>
</dbReference>
<dbReference type="EMBL" id="U21280">
    <property type="protein sequence ID" value="AAB60655.1"/>
    <property type="status" value="JOINED"/>
    <property type="molecule type" value="Genomic_DNA"/>
</dbReference>
<dbReference type="EMBL" id="X61959">
    <property type="protein sequence ID" value="CAA43958.1"/>
    <property type="molecule type" value="Genomic_DNA"/>
</dbReference>
<dbReference type="EMBL" id="M64073">
    <property type="protein sequence ID" value="AAA35903.1"/>
    <property type="molecule type" value="mRNA"/>
</dbReference>
<dbReference type="EMBL" id="M64075">
    <property type="protein sequence ID" value="AAA35904.1"/>
    <property type="status" value="ALT_SEQ"/>
    <property type="molecule type" value="mRNA"/>
</dbReference>
<dbReference type="EMBL" id="M64076">
    <property type="protein sequence ID" value="AAA35905.1"/>
    <property type="status" value="ALT_SEQ"/>
    <property type="molecule type" value="mRNA"/>
</dbReference>
<dbReference type="EMBL" id="M60808">
    <property type="protein sequence ID" value="AAA35901.1"/>
    <property type="molecule type" value="mRNA"/>
</dbReference>
<dbReference type="EMBL" id="M60809">
    <property type="protein sequence ID" value="AAA35902.1"/>
    <property type="molecule type" value="mRNA"/>
</dbReference>
<dbReference type="EMBL" id="AK312982">
    <property type="protein sequence ID" value="BAG35819.1"/>
    <property type="molecule type" value="mRNA"/>
</dbReference>
<dbReference type="EMBL" id="CR541715">
    <property type="protein sequence ID" value="CAG46516.1"/>
    <property type="molecule type" value="mRNA"/>
</dbReference>
<dbReference type="EMBL" id="AC078881">
    <property type="protein sequence ID" value="AAY40915.1"/>
    <property type="molecule type" value="Genomic_DNA"/>
</dbReference>
<dbReference type="EMBL" id="AC027627">
    <property type="status" value="NOT_ANNOTATED_CDS"/>
    <property type="molecule type" value="Genomic_DNA"/>
</dbReference>
<dbReference type="EMBL" id="CH471056">
    <property type="protein sequence ID" value="EAX04714.1"/>
    <property type="molecule type" value="Genomic_DNA"/>
</dbReference>
<dbReference type="EMBL" id="CH471056">
    <property type="protein sequence ID" value="EAX04715.1"/>
    <property type="molecule type" value="Genomic_DNA"/>
</dbReference>
<dbReference type="EMBL" id="BC012392">
    <property type="protein sequence ID" value="AAH12392.1"/>
    <property type="molecule type" value="mRNA"/>
</dbReference>
<dbReference type="CCDS" id="CCDS3829.1"/>
<dbReference type="PIR" id="S11343">
    <property type="entry name" value="MUHUGD"/>
</dbReference>
<dbReference type="RefSeq" id="NP_000018.2">
    <property type="nucleotide sequence ID" value="NM_000027.4"/>
</dbReference>
<dbReference type="RefSeq" id="NP_001165459.1">
    <property type="nucleotide sequence ID" value="NM_001171988.1"/>
</dbReference>
<dbReference type="PDB" id="1APY">
    <property type="method" value="X-ray"/>
    <property type="resolution" value="2.00 A"/>
    <property type="chains" value="A/C=24-185, B/D=206-346"/>
</dbReference>
<dbReference type="PDB" id="1APZ">
    <property type="method" value="X-ray"/>
    <property type="resolution" value="2.30 A"/>
    <property type="chains" value="A/C=24-185, B/D=206-346"/>
</dbReference>
<dbReference type="PDBsum" id="1APY"/>
<dbReference type="PDBsum" id="1APZ"/>
<dbReference type="SMR" id="P20933"/>
<dbReference type="BioGRID" id="106683">
    <property type="interactions" value="42"/>
</dbReference>
<dbReference type="FunCoup" id="P20933">
    <property type="interactions" value="486"/>
</dbReference>
<dbReference type="IntAct" id="P20933">
    <property type="interactions" value="19"/>
</dbReference>
<dbReference type="STRING" id="9606.ENSP00000264595"/>
<dbReference type="BindingDB" id="P20933"/>
<dbReference type="MEROPS" id="T02.001"/>
<dbReference type="GlyConnect" id="1530">
    <property type="glycosylation" value="3 N-Linked glycans (1 site)"/>
</dbReference>
<dbReference type="GlyCosmos" id="P20933">
    <property type="glycosylation" value="2 sites, 3 glycans"/>
</dbReference>
<dbReference type="GlyGen" id="P20933">
    <property type="glycosylation" value="5 sites, 9 N-linked glycans (2 sites), 2 O-linked glycans (2 sites)"/>
</dbReference>
<dbReference type="iPTMnet" id="P20933"/>
<dbReference type="MetOSite" id="P20933"/>
<dbReference type="PhosphoSitePlus" id="P20933"/>
<dbReference type="BioMuta" id="AGA"/>
<dbReference type="DMDM" id="288558804"/>
<dbReference type="jPOST" id="P20933"/>
<dbReference type="MassIVE" id="P20933"/>
<dbReference type="PaxDb" id="9606-ENSP00000264595"/>
<dbReference type="PeptideAtlas" id="P20933"/>
<dbReference type="ProteomicsDB" id="53827"/>
<dbReference type="Pumba" id="P20933"/>
<dbReference type="Antibodypedia" id="28679">
    <property type="antibodies" value="155 antibodies from 22 providers"/>
</dbReference>
<dbReference type="DNASU" id="175"/>
<dbReference type="Ensembl" id="ENST00000264595.7">
    <property type="protein sequence ID" value="ENSP00000264595.2"/>
    <property type="gene ID" value="ENSG00000038002.9"/>
</dbReference>
<dbReference type="GeneID" id="175"/>
<dbReference type="KEGG" id="hsa:175"/>
<dbReference type="MANE-Select" id="ENST00000264595.7">
    <property type="protein sequence ID" value="ENSP00000264595.2"/>
    <property type="RefSeq nucleotide sequence ID" value="NM_000027.4"/>
    <property type="RefSeq protein sequence ID" value="NP_000018.2"/>
</dbReference>
<dbReference type="UCSC" id="uc003iuu.3">
    <property type="organism name" value="human"/>
</dbReference>
<dbReference type="AGR" id="HGNC:318"/>
<dbReference type="CTD" id="175"/>
<dbReference type="DisGeNET" id="175"/>
<dbReference type="GeneCards" id="AGA"/>
<dbReference type="GeneReviews" id="AGA"/>
<dbReference type="HGNC" id="HGNC:318">
    <property type="gene designation" value="AGA"/>
</dbReference>
<dbReference type="HPA" id="ENSG00000038002">
    <property type="expression patterns" value="Low tissue specificity"/>
</dbReference>
<dbReference type="MalaCards" id="AGA"/>
<dbReference type="MIM" id="208400">
    <property type="type" value="phenotype"/>
</dbReference>
<dbReference type="MIM" id="613228">
    <property type="type" value="gene"/>
</dbReference>
<dbReference type="neXtProt" id="NX_P20933"/>
<dbReference type="OpenTargets" id="ENSG00000038002"/>
<dbReference type="Orphanet" id="93">
    <property type="disease" value="Aspartylglucosaminuria"/>
</dbReference>
<dbReference type="PharmGKB" id="PA24615"/>
<dbReference type="VEuPathDB" id="HostDB:ENSG00000038002"/>
<dbReference type="eggNOG" id="KOG1593">
    <property type="taxonomic scope" value="Eukaryota"/>
</dbReference>
<dbReference type="GeneTree" id="ENSGT00950000183045"/>
<dbReference type="HOGENOM" id="CLU_021603_0_0_1"/>
<dbReference type="InParanoid" id="P20933"/>
<dbReference type="OMA" id="YKPIINI"/>
<dbReference type="OrthoDB" id="188713at2759"/>
<dbReference type="PAN-GO" id="P20933">
    <property type="GO annotations" value="4 GO annotations based on evolutionary models"/>
</dbReference>
<dbReference type="PhylomeDB" id="P20933"/>
<dbReference type="TreeFam" id="TF300756"/>
<dbReference type="BioCyc" id="MetaCyc:HS00528-MONOMER"/>
<dbReference type="BRENDA" id="3.5.1.26">
    <property type="organism ID" value="2681"/>
</dbReference>
<dbReference type="PathwayCommons" id="P20933"/>
<dbReference type="Reactome" id="R-HSA-6798695">
    <property type="pathway name" value="Neutrophil degranulation"/>
</dbReference>
<dbReference type="SABIO-RK" id="P20933"/>
<dbReference type="SignaLink" id="P20933"/>
<dbReference type="BioGRID-ORCS" id="175">
    <property type="hits" value="12 hits in 1161 CRISPR screens"/>
</dbReference>
<dbReference type="ChiTaRS" id="AGA">
    <property type="organism name" value="human"/>
</dbReference>
<dbReference type="EvolutionaryTrace" id="P20933"/>
<dbReference type="GeneWiki" id="Aspartylglucosaminidase"/>
<dbReference type="GenomeRNAi" id="175"/>
<dbReference type="Pharos" id="P20933">
    <property type="development level" value="Tbio"/>
</dbReference>
<dbReference type="PRO" id="PR:P20933"/>
<dbReference type="Proteomes" id="UP000005640">
    <property type="component" value="Chromosome 4"/>
</dbReference>
<dbReference type="RNAct" id="P20933">
    <property type="molecule type" value="protein"/>
</dbReference>
<dbReference type="Bgee" id="ENSG00000038002">
    <property type="expression patterns" value="Expressed in esophagus squamous epithelium and 199 other cell types or tissues"/>
</dbReference>
<dbReference type="ExpressionAtlas" id="P20933">
    <property type="expression patterns" value="baseline and differential"/>
</dbReference>
<dbReference type="GO" id="GO:0035578">
    <property type="term" value="C:azurophil granule lumen"/>
    <property type="evidence" value="ECO:0000304"/>
    <property type="project" value="Reactome"/>
</dbReference>
<dbReference type="GO" id="GO:0005737">
    <property type="term" value="C:cytoplasm"/>
    <property type="evidence" value="ECO:0000318"/>
    <property type="project" value="GO_Central"/>
</dbReference>
<dbReference type="GO" id="GO:0005783">
    <property type="term" value="C:endoplasmic reticulum"/>
    <property type="evidence" value="ECO:0000314"/>
    <property type="project" value="UniProtKB"/>
</dbReference>
<dbReference type="GO" id="GO:0005576">
    <property type="term" value="C:extracellular region"/>
    <property type="evidence" value="ECO:0000304"/>
    <property type="project" value="Reactome"/>
</dbReference>
<dbReference type="GO" id="GO:0005615">
    <property type="term" value="C:extracellular space"/>
    <property type="evidence" value="ECO:0000314"/>
    <property type="project" value="UniProtKB"/>
</dbReference>
<dbReference type="GO" id="GO:0005764">
    <property type="term" value="C:lysosome"/>
    <property type="evidence" value="ECO:0000314"/>
    <property type="project" value="UniProtKB"/>
</dbReference>
<dbReference type="GO" id="GO:0003948">
    <property type="term" value="F:N4-(beta-N-acetylglucosaminyl)-L-asparaginase activity"/>
    <property type="evidence" value="ECO:0000314"/>
    <property type="project" value="UniProtKB"/>
</dbReference>
<dbReference type="GO" id="GO:0008233">
    <property type="term" value="F:peptidase activity"/>
    <property type="evidence" value="ECO:0007669"/>
    <property type="project" value="UniProtKB-KW"/>
</dbReference>
<dbReference type="GO" id="GO:0006517">
    <property type="term" value="P:protein deglycosylation"/>
    <property type="evidence" value="ECO:0000314"/>
    <property type="project" value="UniProtKB"/>
</dbReference>
<dbReference type="GO" id="GO:0006508">
    <property type="term" value="P:proteolysis"/>
    <property type="evidence" value="ECO:0007669"/>
    <property type="project" value="UniProtKB-KW"/>
</dbReference>
<dbReference type="CDD" id="cd04513">
    <property type="entry name" value="Glycosylasparaginase"/>
    <property type="match status" value="1"/>
</dbReference>
<dbReference type="FunFam" id="3.60.20.30:FF:000003">
    <property type="entry name" value="N(4)-(Beta-N-acetylglucosaminyl)-L-asparaginase isoform X1"/>
    <property type="match status" value="1"/>
</dbReference>
<dbReference type="Gene3D" id="3.60.20.30">
    <property type="entry name" value="(Glycosyl)asparaginase"/>
    <property type="match status" value="1"/>
</dbReference>
<dbReference type="InterPro" id="IPR029055">
    <property type="entry name" value="Ntn_hydrolases_N"/>
</dbReference>
<dbReference type="InterPro" id="IPR000246">
    <property type="entry name" value="Peptidase_T2"/>
</dbReference>
<dbReference type="PANTHER" id="PTHR10188">
    <property type="entry name" value="L-ASPARAGINASE"/>
    <property type="match status" value="1"/>
</dbReference>
<dbReference type="PANTHER" id="PTHR10188:SF6">
    <property type="entry name" value="N(4)-(BETA-N-ACETYLGLUCOSAMINYL)-L-ASPARAGINASE"/>
    <property type="match status" value="1"/>
</dbReference>
<dbReference type="Pfam" id="PF01112">
    <property type="entry name" value="Asparaginase_2"/>
    <property type="match status" value="1"/>
</dbReference>
<dbReference type="SUPFAM" id="SSF56235">
    <property type="entry name" value="N-terminal nucleophile aminohydrolases (Ntn hydrolases)"/>
    <property type="match status" value="1"/>
</dbReference>
<accession>P20933</accession>
<accession>B2R7H2</accession>
<accession>D3DP47</accession>
<accession>Q4W5Q2</accession>
<accession>Q6FHN6</accession>
<accession>Q9UCK6</accession>
<accession>Q9UCK7</accession>
<accession>Q9UCK8</accession>
<reference key="1">
    <citation type="journal article" date="1990" name="FEBS Lett.">
        <title>Cloning and sequence analysis of a cDNA for human glycosylasparaginase. A single gene encodes the subunits of this lysosomal amidase.</title>
        <authorList>
            <person name="Fisher K.J."/>
            <person name="Tollersrud O.-K."/>
            <person name="Aronson N.N. Jr."/>
        </authorList>
    </citation>
    <scope>NUCLEOTIDE SEQUENCE [MRNA]</scope>
    <scope>FUNCTION</scope>
    <scope>CATALYTIC ACTIVITY</scope>
    <scope>VARIANT SER-149</scope>
    <scope>GLYCOSYLATION</scope>
</reference>
<reference key="2">
    <citation type="journal article" date="1990" name="FEBS Lett.">
        <authorList>
            <person name="Fisher K.J."/>
            <person name="Tollersrud O.-K."/>
            <person name="Aronson N.N. Jr."/>
        </authorList>
    </citation>
    <scope>ERRATUM OF PUBMED:2401370</scope>
</reference>
<reference key="3">
    <citation type="journal article" date="1991" name="EMBO J.">
        <title>Aspartylglucosaminuria: cDNA encoding human aspartylglucosaminidase and the missense mutation causing the disease.</title>
        <authorList>
            <person name="Ikonen E."/>
            <person name="Baumann M."/>
            <person name="Groen K."/>
            <person name="Syvaenen A.-C."/>
            <person name="Enomaa N."/>
            <person name="Halila R."/>
            <person name="Aula P."/>
            <person name="Peltonen L."/>
        </authorList>
    </citation>
    <scope>NUCLEOTIDE SEQUENCE [MRNA]</scope>
    <scope>PROTEIN SEQUENCE OF 206-235</scope>
    <scope>ACTIVATION BY CLEAVAGE</scope>
    <scope>CATALYTIC ACTIVITY</scope>
    <scope>VARIANTS AGU GLN-161 AND SER-163</scope>
    <scope>VARIANT SER-149</scope>
    <scope>CHARACTERIZATION OF VARIANT AGU SER-163</scope>
    <scope>FUNCTION</scope>
    <source>
        <tissue>Fetal liver</tissue>
    </source>
</reference>
<reference key="4">
    <citation type="journal article" date="1991" name="FEBS Lett.">
        <title>Genomic structure of human lysosomal glycosylasparaginase.</title>
        <authorList>
            <person name="Park H."/>
            <person name="Fisher K.J."/>
            <person name="Aronson N.N. Jr."/>
        </authorList>
    </citation>
    <scope>NUCLEOTIDE SEQUENCE [GENOMIC DNA]</scope>
    <scope>VARIANT SER-149</scope>
</reference>
<reference key="5">
    <citation type="journal article" date="1991" name="J. Biol. Chem.">
        <title>Characterization of the mutation responsible for aspartylglucosaminuria in three Finnish patients. Amino acid substitution Cys163--&gt;Ser abolishes the activity of lysosomal glycosylasparaginase and its conversion into subunits.</title>
        <authorList>
            <person name="Fisher K.J."/>
            <person name="Aronson N.N. Jr."/>
        </authorList>
    </citation>
    <scope>NUCLEOTIDE SEQUENCE [MRNA]</scope>
    <scope>AUTOCATALYTIC CLEAVAGE</scope>
    <scope>CATALYTIC ACTIVITY</scope>
    <scope>VARIANTS AGU GLN-161 AND SER-163</scope>
    <scope>VARIANT SER-149</scope>
    <scope>FUNCTION</scope>
</reference>
<reference key="6">
    <citation type="journal article" date="1991" name="Proc. Natl. Acad. Sci. U.S.A.">
        <title>Aspartylglycosaminuria in the Finnish population: identification of two point mutations in the heavy chain of glycoasparaginase.</title>
        <authorList>
            <person name="Mononen I."/>
            <person name="Heisterkamp N."/>
            <person name="Kaartinen V."/>
            <person name="Williams J.C."/>
            <person name="Yates J.R. III"/>
            <person name="Griffin P.R."/>
            <person name="Hood L.E."/>
            <person name="Groffen J."/>
        </authorList>
    </citation>
    <scope>NUCLEOTIDE SEQUENCE [MRNA]</scope>
    <scope>PROTEIN SEQUENCE OF 24-45; 47-60; 67-84; 98-120; 123-190; 206-314 AND 320-343</scope>
    <scope>VARIANTS AGU GLN-161 AND SER-163</scope>
</reference>
<reference key="7">
    <citation type="journal article" date="2004" name="Nat. Genet.">
        <title>Complete sequencing and characterization of 21,243 full-length human cDNAs.</title>
        <authorList>
            <person name="Ota T."/>
            <person name="Suzuki Y."/>
            <person name="Nishikawa T."/>
            <person name="Otsuki T."/>
            <person name="Sugiyama T."/>
            <person name="Irie R."/>
            <person name="Wakamatsu A."/>
            <person name="Hayashi K."/>
            <person name="Sato H."/>
            <person name="Nagai K."/>
            <person name="Kimura K."/>
            <person name="Makita H."/>
            <person name="Sekine M."/>
            <person name="Obayashi M."/>
            <person name="Nishi T."/>
            <person name="Shibahara T."/>
            <person name="Tanaka T."/>
            <person name="Ishii S."/>
            <person name="Yamamoto J."/>
            <person name="Saito K."/>
            <person name="Kawai Y."/>
            <person name="Isono Y."/>
            <person name="Nakamura Y."/>
            <person name="Nagahari K."/>
            <person name="Murakami K."/>
            <person name="Yasuda T."/>
            <person name="Iwayanagi T."/>
            <person name="Wagatsuma M."/>
            <person name="Shiratori A."/>
            <person name="Sudo H."/>
            <person name="Hosoiri T."/>
            <person name="Kaku Y."/>
            <person name="Kodaira H."/>
            <person name="Kondo H."/>
            <person name="Sugawara M."/>
            <person name="Takahashi M."/>
            <person name="Kanda K."/>
            <person name="Yokoi T."/>
            <person name="Furuya T."/>
            <person name="Kikkawa E."/>
            <person name="Omura Y."/>
            <person name="Abe K."/>
            <person name="Kamihara K."/>
            <person name="Katsuta N."/>
            <person name="Sato K."/>
            <person name="Tanikawa M."/>
            <person name="Yamazaki M."/>
            <person name="Ninomiya K."/>
            <person name="Ishibashi T."/>
            <person name="Yamashita H."/>
            <person name="Murakawa K."/>
            <person name="Fujimori K."/>
            <person name="Tanai H."/>
            <person name="Kimata M."/>
            <person name="Watanabe M."/>
            <person name="Hiraoka S."/>
            <person name="Chiba Y."/>
            <person name="Ishida S."/>
            <person name="Ono Y."/>
            <person name="Takiguchi S."/>
            <person name="Watanabe S."/>
            <person name="Yosida M."/>
            <person name="Hotuta T."/>
            <person name="Kusano J."/>
            <person name="Kanehori K."/>
            <person name="Takahashi-Fujii A."/>
            <person name="Hara H."/>
            <person name="Tanase T.-O."/>
            <person name="Nomura Y."/>
            <person name="Togiya S."/>
            <person name="Komai F."/>
            <person name="Hara R."/>
            <person name="Takeuchi K."/>
            <person name="Arita M."/>
            <person name="Imose N."/>
            <person name="Musashino K."/>
            <person name="Yuuki H."/>
            <person name="Oshima A."/>
            <person name="Sasaki N."/>
            <person name="Aotsuka S."/>
            <person name="Yoshikawa Y."/>
            <person name="Matsunawa H."/>
            <person name="Ichihara T."/>
            <person name="Shiohata N."/>
            <person name="Sano S."/>
            <person name="Moriya S."/>
            <person name="Momiyama H."/>
            <person name="Satoh N."/>
            <person name="Takami S."/>
            <person name="Terashima Y."/>
            <person name="Suzuki O."/>
            <person name="Nakagawa S."/>
            <person name="Senoh A."/>
            <person name="Mizoguchi H."/>
            <person name="Goto Y."/>
            <person name="Shimizu F."/>
            <person name="Wakebe H."/>
            <person name="Hishigaki H."/>
            <person name="Watanabe T."/>
            <person name="Sugiyama A."/>
            <person name="Takemoto M."/>
            <person name="Kawakami B."/>
            <person name="Yamazaki M."/>
            <person name="Watanabe K."/>
            <person name="Kumagai A."/>
            <person name="Itakura S."/>
            <person name="Fukuzumi Y."/>
            <person name="Fujimori Y."/>
            <person name="Komiyama M."/>
            <person name="Tashiro H."/>
            <person name="Tanigami A."/>
            <person name="Fujiwara T."/>
            <person name="Ono T."/>
            <person name="Yamada K."/>
            <person name="Fujii Y."/>
            <person name="Ozaki K."/>
            <person name="Hirao M."/>
            <person name="Ohmori Y."/>
            <person name="Kawabata A."/>
            <person name="Hikiji T."/>
            <person name="Kobatake N."/>
            <person name="Inagaki H."/>
            <person name="Ikema Y."/>
            <person name="Okamoto S."/>
            <person name="Okitani R."/>
            <person name="Kawakami T."/>
            <person name="Noguchi S."/>
            <person name="Itoh T."/>
            <person name="Shigeta K."/>
            <person name="Senba T."/>
            <person name="Matsumura K."/>
            <person name="Nakajima Y."/>
            <person name="Mizuno T."/>
            <person name="Morinaga M."/>
            <person name="Sasaki M."/>
            <person name="Togashi T."/>
            <person name="Oyama M."/>
            <person name="Hata H."/>
            <person name="Watanabe M."/>
            <person name="Komatsu T."/>
            <person name="Mizushima-Sugano J."/>
            <person name="Satoh T."/>
            <person name="Shirai Y."/>
            <person name="Takahashi Y."/>
            <person name="Nakagawa K."/>
            <person name="Okumura K."/>
            <person name="Nagase T."/>
            <person name="Nomura N."/>
            <person name="Kikuchi H."/>
            <person name="Masuho Y."/>
            <person name="Yamashita R."/>
            <person name="Nakai K."/>
            <person name="Yada T."/>
            <person name="Nakamura Y."/>
            <person name="Ohara O."/>
            <person name="Isogai T."/>
            <person name="Sugano S."/>
        </authorList>
    </citation>
    <scope>NUCLEOTIDE SEQUENCE [LARGE SCALE MRNA]</scope>
    <scope>VARIANT SER-149</scope>
    <source>
        <tissue>Urinary bladder</tissue>
    </source>
</reference>
<reference key="8">
    <citation type="submission" date="2004-06" db="EMBL/GenBank/DDBJ databases">
        <title>Cloning of human full open reading frames in Gateway(TM) system entry vector (pDONR201).</title>
        <authorList>
            <person name="Halleck A."/>
            <person name="Ebert L."/>
            <person name="Mkoundinya M."/>
            <person name="Schick M."/>
            <person name="Eisenstein S."/>
            <person name="Neubert P."/>
            <person name="Kstrang K."/>
            <person name="Schatten R."/>
            <person name="Shen B."/>
            <person name="Henze S."/>
            <person name="Mar W."/>
            <person name="Korn B."/>
            <person name="Zuo D."/>
            <person name="Hu Y."/>
            <person name="LaBaer J."/>
        </authorList>
    </citation>
    <scope>NUCLEOTIDE SEQUENCE [LARGE SCALE MRNA]</scope>
    <scope>VARIANT SER-149</scope>
</reference>
<reference key="9">
    <citation type="journal article" date="2005" name="Nature">
        <title>Generation and annotation of the DNA sequences of human chromosomes 2 and 4.</title>
        <authorList>
            <person name="Hillier L.W."/>
            <person name="Graves T.A."/>
            <person name="Fulton R.S."/>
            <person name="Fulton L.A."/>
            <person name="Pepin K.H."/>
            <person name="Minx P."/>
            <person name="Wagner-McPherson C."/>
            <person name="Layman D."/>
            <person name="Wylie K."/>
            <person name="Sekhon M."/>
            <person name="Becker M.C."/>
            <person name="Fewell G.A."/>
            <person name="Delehaunty K.D."/>
            <person name="Miner T.L."/>
            <person name="Nash W.E."/>
            <person name="Kremitzki C."/>
            <person name="Oddy L."/>
            <person name="Du H."/>
            <person name="Sun H."/>
            <person name="Bradshaw-Cordum H."/>
            <person name="Ali J."/>
            <person name="Carter J."/>
            <person name="Cordes M."/>
            <person name="Harris A."/>
            <person name="Isak A."/>
            <person name="van Brunt A."/>
            <person name="Nguyen C."/>
            <person name="Du F."/>
            <person name="Courtney L."/>
            <person name="Kalicki J."/>
            <person name="Ozersky P."/>
            <person name="Abbott S."/>
            <person name="Armstrong J."/>
            <person name="Belter E.A."/>
            <person name="Caruso L."/>
            <person name="Cedroni M."/>
            <person name="Cotton M."/>
            <person name="Davidson T."/>
            <person name="Desai A."/>
            <person name="Elliott G."/>
            <person name="Erb T."/>
            <person name="Fronick C."/>
            <person name="Gaige T."/>
            <person name="Haakenson W."/>
            <person name="Haglund K."/>
            <person name="Holmes A."/>
            <person name="Harkins R."/>
            <person name="Kim K."/>
            <person name="Kruchowski S.S."/>
            <person name="Strong C.M."/>
            <person name="Grewal N."/>
            <person name="Goyea E."/>
            <person name="Hou S."/>
            <person name="Levy A."/>
            <person name="Martinka S."/>
            <person name="Mead K."/>
            <person name="McLellan M.D."/>
            <person name="Meyer R."/>
            <person name="Randall-Maher J."/>
            <person name="Tomlinson C."/>
            <person name="Dauphin-Kohlberg S."/>
            <person name="Kozlowicz-Reilly A."/>
            <person name="Shah N."/>
            <person name="Swearengen-Shahid S."/>
            <person name="Snider J."/>
            <person name="Strong J.T."/>
            <person name="Thompson J."/>
            <person name="Yoakum M."/>
            <person name="Leonard S."/>
            <person name="Pearman C."/>
            <person name="Trani L."/>
            <person name="Radionenko M."/>
            <person name="Waligorski J.E."/>
            <person name="Wang C."/>
            <person name="Rock S.M."/>
            <person name="Tin-Wollam A.-M."/>
            <person name="Maupin R."/>
            <person name="Latreille P."/>
            <person name="Wendl M.C."/>
            <person name="Yang S.-P."/>
            <person name="Pohl C."/>
            <person name="Wallis J.W."/>
            <person name="Spieth J."/>
            <person name="Bieri T.A."/>
            <person name="Berkowicz N."/>
            <person name="Nelson J.O."/>
            <person name="Osborne J."/>
            <person name="Ding L."/>
            <person name="Meyer R."/>
            <person name="Sabo A."/>
            <person name="Shotland Y."/>
            <person name="Sinha P."/>
            <person name="Wohldmann P.E."/>
            <person name="Cook L.L."/>
            <person name="Hickenbotham M.T."/>
            <person name="Eldred J."/>
            <person name="Williams D."/>
            <person name="Jones T.A."/>
            <person name="She X."/>
            <person name="Ciccarelli F.D."/>
            <person name="Izaurralde E."/>
            <person name="Taylor J."/>
            <person name="Schmutz J."/>
            <person name="Myers R.M."/>
            <person name="Cox D.R."/>
            <person name="Huang X."/>
            <person name="McPherson J.D."/>
            <person name="Mardis E.R."/>
            <person name="Clifton S.W."/>
            <person name="Warren W.C."/>
            <person name="Chinwalla A.T."/>
            <person name="Eddy S.R."/>
            <person name="Marra M.A."/>
            <person name="Ovcharenko I."/>
            <person name="Furey T.S."/>
            <person name="Miller W."/>
            <person name="Eichler E.E."/>
            <person name="Bork P."/>
            <person name="Suyama M."/>
            <person name="Torrents D."/>
            <person name="Waterston R.H."/>
            <person name="Wilson R.K."/>
        </authorList>
    </citation>
    <scope>NUCLEOTIDE SEQUENCE [LARGE SCALE GENOMIC DNA]</scope>
</reference>
<reference key="10">
    <citation type="submission" date="2005-09" db="EMBL/GenBank/DDBJ databases">
        <authorList>
            <person name="Mural R.J."/>
            <person name="Istrail S."/>
            <person name="Sutton G.G."/>
            <person name="Florea L."/>
            <person name="Halpern A.L."/>
            <person name="Mobarry C.M."/>
            <person name="Lippert R."/>
            <person name="Walenz B."/>
            <person name="Shatkay H."/>
            <person name="Dew I."/>
            <person name="Miller J.R."/>
            <person name="Flanigan M.J."/>
            <person name="Edwards N.J."/>
            <person name="Bolanos R."/>
            <person name="Fasulo D."/>
            <person name="Halldorsson B.V."/>
            <person name="Hannenhalli S."/>
            <person name="Turner R."/>
            <person name="Yooseph S."/>
            <person name="Lu F."/>
            <person name="Nusskern D.R."/>
            <person name="Shue B.C."/>
            <person name="Zheng X.H."/>
            <person name="Zhong F."/>
            <person name="Delcher A.L."/>
            <person name="Huson D.H."/>
            <person name="Kravitz S.A."/>
            <person name="Mouchard L."/>
            <person name="Reinert K."/>
            <person name="Remington K.A."/>
            <person name="Clark A.G."/>
            <person name="Waterman M.S."/>
            <person name="Eichler E.E."/>
            <person name="Adams M.D."/>
            <person name="Hunkapiller M.W."/>
            <person name="Myers E.W."/>
            <person name="Venter J.C."/>
        </authorList>
    </citation>
    <scope>NUCLEOTIDE SEQUENCE [LARGE SCALE GENOMIC DNA]</scope>
    <scope>VARIANT SER-149</scope>
</reference>
<reference key="11">
    <citation type="journal article" date="2004" name="Genome Res.">
        <title>The status, quality, and expansion of the NIH full-length cDNA project: the Mammalian Gene Collection (MGC).</title>
        <authorList>
            <consortium name="The MGC Project Team"/>
        </authorList>
    </citation>
    <scope>NUCLEOTIDE SEQUENCE [LARGE SCALE MRNA]</scope>
    <scope>VARIANT SER-149</scope>
    <source>
        <tissue>Ovary</tissue>
    </source>
</reference>
<reference key="12">
    <citation type="journal article" date="1992" name="Biochem. J.">
        <title>Purification and structure of human liver aspartylglucosaminidase.</title>
        <authorList>
            <person name="Rip J.W."/>
            <person name="Coulter-Mackie M.B."/>
            <person name="Rupar C.A."/>
            <person name="Gordon B.A."/>
        </authorList>
    </citation>
    <scope>PROTEIN SEQUENCE OF 25-44 AND 206-231</scope>
    <scope>GLYCOSYLATION AT ASN-38</scope>
    <source>
        <tissue>Liver</tissue>
    </source>
</reference>
<reference key="13">
    <citation type="journal article" date="2011" name="BMC Syst. Biol.">
        <title>Initial characterization of the human central proteome.</title>
        <authorList>
            <person name="Burkard T.R."/>
            <person name="Planyavsky M."/>
            <person name="Kaupe I."/>
            <person name="Breitwieser F.P."/>
            <person name="Buerckstuemmer T."/>
            <person name="Bennett K.L."/>
            <person name="Superti-Furga G."/>
            <person name="Colinge J."/>
        </authorList>
    </citation>
    <scope>IDENTIFICATION BY MASS SPECTROMETRY [LARGE SCALE ANALYSIS]</scope>
</reference>
<reference key="14">
    <citation type="journal article" date="2014" name="J. Proteomics">
        <title>An enzyme assisted RP-RPLC approach for in-depth analysis of human liver phosphoproteome.</title>
        <authorList>
            <person name="Bian Y."/>
            <person name="Song C."/>
            <person name="Cheng K."/>
            <person name="Dong M."/>
            <person name="Wang F."/>
            <person name="Huang J."/>
            <person name="Sun D."/>
            <person name="Wang L."/>
            <person name="Ye M."/>
            <person name="Zou H."/>
        </authorList>
    </citation>
    <scope>IDENTIFICATION BY MASS SPECTROMETRY [LARGE SCALE ANALYSIS]</scope>
    <source>
        <tissue>Liver</tissue>
    </source>
</reference>
<reference key="15">
    <citation type="journal article" date="2015" name="Proteomics">
        <title>N-terminome analysis of the human mitochondrial proteome.</title>
        <authorList>
            <person name="Vaca Jacome A.S."/>
            <person name="Rabilloud T."/>
            <person name="Schaeffer-Reiss C."/>
            <person name="Rompais M."/>
            <person name="Ayoub D."/>
            <person name="Lane L."/>
            <person name="Bairoch A."/>
            <person name="Van Dorsselaer A."/>
            <person name="Carapito C."/>
        </authorList>
    </citation>
    <scope>CLEAVAGE OF SIGNAL PEPTIDE [LARGE SCALE ANALYSIS] AFTER CYS-23</scope>
    <scope>IDENTIFICATION BY MASS SPECTROMETRY [LARGE SCALE ANALYSIS]</scope>
</reference>
<reference key="16">
    <citation type="journal article" date="1995" name="Nat. Struct. Biol.">
        <title>Three-dimensional structure of human lysosomal aspartylglucosaminidase.</title>
        <authorList>
            <person name="Oinonen C."/>
            <person name="Tikkanen R."/>
            <person name="Rouvinen J."/>
            <person name="Peltonen L."/>
        </authorList>
    </citation>
    <scope>X-RAY CRYSTALLOGRAPHY (2.0 ANGSTROMS) OF 24-185 IN COMPLEX WITH ASPARTIC ACID</scope>
    <scope>SUBUNIT</scope>
    <scope>ACTIVE SITE</scope>
    <scope>GLYCOSYLATION AT ASN-38 AND ASN-308</scope>
    <scope>DISULFIDE BONDS</scope>
</reference>
<reference key="17">
    <citation type="journal article" date="1992" name="Hum. Mutat.">
        <title>Mutations causing aspartylglucosaminuria (AGU): a lysosomal accumulation disease.</title>
        <authorList>
            <person name="Ikonen E."/>
            <person name="Peltonen L."/>
        </authorList>
    </citation>
    <scope>VARIANTS AGU ASP-60; VAL-101; ARG-302 AND ARG-306</scope>
</reference>
<reference key="18">
    <citation type="journal article" date="1996" name="Hum. Mol. Genet.">
        <title>Ser72--&gt;Pro active-site disease mutation in human lysosomal aspartylglucosaminidase: abnormal intracellular processing and evidence for extracellular activation.</title>
        <authorList>
            <person name="Peltola M."/>
            <person name="Tikkanen R."/>
            <person name="Peltonen L."/>
            <person name="Jalanko A."/>
        </authorList>
    </citation>
    <scope>VARIANT AGU PRO-72</scope>
</reference>
<reference key="19">
    <citation type="journal article" date="1997" name="Clin. Genet.">
        <title>Two novel mutations in a Canadian family with aspartylglucosaminuria and early outcome post bone marrow transplantation.</title>
        <authorList>
            <person name="Laitinen A."/>
            <person name="Hietala M."/>
            <person name="Haworth J.C."/>
            <person name="Schroeder M.L."/>
            <person name="Seargeant L.E."/>
            <person name="Greenberg C.R."/>
            <person name="Aula P."/>
        </authorList>
    </citation>
    <scope>VARIANTS AGU GLU-100 AND SER-135</scope>
</reference>
<reference key="20">
    <citation type="journal article" date="2001" name="Hum. Mol. Genet.">
        <title>Molecular pathogenesis of a disease: structural consequences of aspartylglucosaminuria mutations.</title>
        <authorList>
            <person name="Saarela J."/>
            <person name="Laine M."/>
            <person name="Oinonen C."/>
            <person name="Schantz C."/>
            <person name="Jalanko A."/>
            <person name="Rouvinen J."/>
            <person name="Peltonen L."/>
        </authorList>
    </citation>
    <scope>VARIANTS AGU LEU-12; ARG-252; GLU-252 AND ILE-257</scope>
</reference>
<keyword id="KW-0002">3D-structure</keyword>
<keyword id="KW-0068">Autocatalytic cleavage</keyword>
<keyword id="KW-0903">Direct protein sequencing</keyword>
<keyword id="KW-0225">Disease variant</keyword>
<keyword id="KW-1015">Disulfide bond</keyword>
<keyword id="KW-0325">Glycoprotein</keyword>
<keyword id="KW-0378">Hydrolase</keyword>
<keyword id="KW-0458">Lysosome</keyword>
<keyword id="KW-0645">Protease</keyword>
<keyword id="KW-1267">Proteomics identification</keyword>
<keyword id="KW-1185">Reference proteome</keyword>
<keyword id="KW-0732">Signal</keyword>
<evidence type="ECO:0000269" key="1">
    <source>
    </source>
</evidence>
<evidence type="ECO:0000269" key="2">
    <source>
    </source>
</evidence>
<evidence type="ECO:0000269" key="3">
    <source>
    </source>
</evidence>
<evidence type="ECO:0000269" key="4">
    <source>
    </source>
</evidence>
<evidence type="ECO:0000269" key="5">
    <source>
    </source>
</evidence>
<evidence type="ECO:0000269" key="6">
    <source>
    </source>
</evidence>
<evidence type="ECO:0000269" key="7">
    <source>
    </source>
</evidence>
<evidence type="ECO:0000269" key="8">
    <source>
    </source>
</evidence>
<evidence type="ECO:0000269" key="9">
    <source>
    </source>
</evidence>
<evidence type="ECO:0000269" key="10">
    <source>
    </source>
</evidence>
<evidence type="ECO:0000269" key="11">
    <source>
    </source>
</evidence>
<evidence type="ECO:0000269" key="12">
    <source>
    </source>
</evidence>
<evidence type="ECO:0000269" key="13">
    <source>
    </source>
</evidence>
<evidence type="ECO:0000269" key="14">
    <source ref="10"/>
</evidence>
<evidence type="ECO:0000269" key="15">
    <source ref="8"/>
</evidence>
<evidence type="ECO:0000305" key="16"/>
<evidence type="ECO:0007744" key="17">
    <source>
        <dbReference type="PDB" id="1APY"/>
    </source>
</evidence>
<evidence type="ECO:0007744" key="18">
    <source>
        <dbReference type="PDB" id="1APZ"/>
    </source>
</evidence>
<evidence type="ECO:0007744" key="19">
    <source>
    </source>
</evidence>
<evidence type="ECO:0007829" key="20">
    <source>
        <dbReference type="PDB" id="1APY"/>
    </source>
</evidence>
<evidence type="ECO:0007829" key="21">
    <source>
        <dbReference type="PDB" id="1APZ"/>
    </source>
</evidence>
<comment type="function">
    <text evidence="6 8 10">Cleaves the GlcNAc-Asn bond which joins oligosaccharides to the peptide of asparagine-linked glycoproteins.</text>
</comment>
<comment type="catalytic activity">
    <reaction evidence="6 8 10">
        <text>N(4)-(beta-N-acetyl-D-glucosaminyl)-L-asparagine + H2O = N-acetyl-beta-D-glucosaminylamine + L-aspartate + H(+)</text>
        <dbReference type="Rhea" id="RHEA:11544"/>
        <dbReference type="ChEBI" id="CHEBI:15377"/>
        <dbReference type="ChEBI" id="CHEBI:15378"/>
        <dbReference type="ChEBI" id="CHEBI:15947"/>
        <dbReference type="ChEBI" id="CHEBI:29991"/>
        <dbReference type="ChEBI" id="CHEBI:58080"/>
        <dbReference type="EC" id="3.5.1.26"/>
    </reaction>
</comment>
<comment type="subunit">
    <text evidence="12">Heterotetramer of two alpha and two beta chains arranged as a dimer of alpha/beta heterodimers.</text>
</comment>
<comment type="interaction">
    <interactant intactId="EBI-1223922">
        <id>P20933</id>
    </interactant>
    <interactant intactId="EBI-10975473">
        <id>O60333-2</id>
        <label>KIF1B</label>
    </interactant>
    <organismsDiffer>false</organismsDiffer>
    <experiments>3</experiments>
</comment>
<comment type="interaction">
    <interactant intactId="EBI-1223922">
        <id>P20933</id>
    </interactant>
    <interactant intactId="EBI-11749135">
        <id>Q8IUG1</id>
        <label>KRTAP1-3</label>
    </interactant>
    <organismsDiffer>false</organismsDiffer>
    <experiments>3</experiments>
</comment>
<comment type="interaction">
    <interactant intactId="EBI-1223922">
        <id>P20933</id>
    </interactant>
    <interactant intactId="EBI-475646">
        <id>P07196</id>
        <label>NEFL</label>
    </interactant>
    <organismsDiffer>false</organismsDiffer>
    <experiments>3</experiments>
</comment>
<comment type="interaction">
    <interactant intactId="EBI-1223922">
        <id>P20933</id>
    </interactant>
    <interactant intactId="EBI-720609">
        <id>O76024</id>
        <label>WFS1</label>
    </interactant>
    <organismsDiffer>false</organismsDiffer>
    <experiments>3</experiments>
</comment>
<comment type="subcellular location">
    <subcellularLocation>
        <location>Lysosome</location>
    </subcellularLocation>
</comment>
<comment type="PTM">
    <text evidence="2 6 8">Cleaved into an alpha and beta chain by autocatalysis; this activates the enzyme. The N-terminal residue of the beta subunit is responsible for the nucleophile hydrolase activity.</text>
</comment>
<comment type="PTM">
    <text evidence="10">N-glycosylated.</text>
</comment>
<comment type="disease" evidence="1 3 6 8 9 11 13">
    <disease id="DI-00137">
        <name>Aspartylglucosaminuria</name>
        <acronym>AGU</acronym>
        <description>An inborn lysosomal storage disease causing excess accumulation of glycoasparagine in the body tissues and its increased excretion in urine. Clinical features include mild to severe intellectual disability manifesting from the age of two, coarse facial features and mild connective tissue abnormalities.</description>
        <dbReference type="MIM" id="208400"/>
    </disease>
    <text>The disease is caused by variants affecting the gene represented in this entry.</text>
</comment>
<comment type="similarity">
    <text evidence="16">Belongs to the Ntn-hydrolase family.</text>
</comment>
<sequence>MARKSNLPVLLVPFLLCQALVRCSSPLPLVVNTWPFKNATEAAWRALASGGSALDAVESGCAMCEREQCDGSVGFGGSPDELGETTLDAMIMDGTTMDVGAVGDLRRIKNAIGVARKVLEHTTHTLLVGESATTFAQSMGFINEDLSTTASQALHSDWLARNCQPNYWRNVIPDPSKYCGPYKPPGILKQDIPIHKETEDDRGHDTIGMVVIHKTGHIAAGTSTNGIKFKIHGRVGDSPIPGAGAYADDTAGAAAATGNGDILMRFLPSYQAVEYMRRGEDPTIACQKVISRIQKHFPEFFGAVICANVTGSYGAACNKLSTFTQFSFMVYNSEKNQPTEEKVDCI</sequence>
<proteinExistence type="evidence at protein level"/>
<organism>
    <name type="scientific">Homo sapiens</name>
    <name type="common">Human</name>
    <dbReference type="NCBI Taxonomy" id="9606"/>
    <lineage>
        <taxon>Eukaryota</taxon>
        <taxon>Metazoa</taxon>
        <taxon>Chordata</taxon>
        <taxon>Craniata</taxon>
        <taxon>Vertebrata</taxon>
        <taxon>Euteleostomi</taxon>
        <taxon>Mammalia</taxon>
        <taxon>Eutheria</taxon>
        <taxon>Euarchontoglires</taxon>
        <taxon>Primates</taxon>
        <taxon>Haplorrhini</taxon>
        <taxon>Catarrhini</taxon>
        <taxon>Hominidae</taxon>
        <taxon>Homo</taxon>
    </lineage>
</organism>
<feature type="signal peptide" evidence="9 19">
    <location>
        <begin position="1"/>
        <end position="23"/>
    </location>
</feature>
<feature type="chain" id="PRO_0000002333" description="Glycosylasparaginase alpha chain">
    <location>
        <begin position="24"/>
        <end position="205"/>
    </location>
</feature>
<feature type="chain" id="PRO_0000002334" description="Glycosylasparaginase beta chain">
    <location>
        <begin position="206"/>
        <end position="346"/>
    </location>
</feature>
<feature type="active site" description="Nucleophile" evidence="12">
    <location>
        <position position="206"/>
    </location>
</feature>
<feature type="binding site" evidence="12">
    <location>
        <begin position="234"/>
        <end position="237"/>
    </location>
    <ligand>
        <name>substrate</name>
    </ligand>
</feature>
<feature type="binding site" evidence="12">
    <location>
        <begin position="257"/>
        <end position="260"/>
    </location>
    <ligand>
        <name>substrate</name>
    </ligand>
</feature>
<feature type="modified residue" description="Blocked amino end (Ser)">
    <location>
        <position position="24"/>
    </location>
</feature>
<feature type="glycosylation site" description="N-linked (GlcNAc...) asparagine" evidence="2 10 12 17 18">
    <location>
        <position position="38"/>
    </location>
</feature>
<feature type="glycosylation site" description="N-linked (GlcNAc...) asparagine" evidence="12 17 18">
    <location>
        <position position="308"/>
    </location>
</feature>
<feature type="disulfide bond" evidence="12 17 18">
    <location>
        <begin position="64"/>
        <end position="69"/>
    </location>
</feature>
<feature type="disulfide bond" evidence="12 17 18">
    <location>
        <begin position="163"/>
        <end position="179"/>
    </location>
</feature>
<feature type="disulfide bond" evidence="12 17 18">
    <location>
        <begin position="286"/>
        <end position="306"/>
    </location>
</feature>
<feature type="disulfide bond" evidence="12 17 18">
    <location>
        <begin position="317"/>
        <end position="345"/>
    </location>
</feature>
<feature type="sequence variant" id="VAR_015427" description="In AGU; uncertain significance; dbSNP:rs74626221." evidence="1">
    <original>V</original>
    <variation>L</variation>
    <location>
        <position position="12"/>
    </location>
</feature>
<feature type="sequence variant" id="VAR_005069" description="In AGU; dbSNP:rs121964907." evidence="3">
    <original>G</original>
    <variation>D</variation>
    <location>
        <position position="60"/>
    </location>
</feature>
<feature type="sequence variant" id="VAR_005070" description="In AGU; specifically prevents the proteolytic activation cleavage of AGA in the endoplasmic reticulum; dbSNP:rs121964909." evidence="11">
    <original>S</original>
    <variation>P</variation>
    <location>
        <position position="72"/>
    </location>
</feature>
<feature type="sequence variant" id="VAR_015428" description="In AGU; dbSNP:rs386833421." evidence="13">
    <original>G</original>
    <variation>E</variation>
    <location>
        <position position="100"/>
    </location>
</feature>
<feature type="sequence variant" id="VAR_005071" description="In AGU; dbSNP:rs121964908." evidence="3">
    <original>A</original>
    <variation>V</variation>
    <location>
        <position position="101"/>
    </location>
</feature>
<feature type="sequence variant" id="VAR_015429" description="In AGU; dbSNP:rs386833427." evidence="13">
    <original>F</original>
    <variation>S</variation>
    <location>
        <position position="135"/>
    </location>
</feature>
<feature type="sequence variant" id="VAR_033533" description="In dbSNP:rs2228119." evidence="4 5 6 7 8 10 14 15">
    <original>T</original>
    <variation>S</variation>
    <location>
        <position position="149"/>
    </location>
</feature>
<feature type="sequence variant" id="VAR_005072" description="In AGU; dbSNP:rs192195150." evidence="6 8 9">
    <original>R</original>
    <variation>Q</variation>
    <location>
        <position position="161"/>
    </location>
</feature>
<feature type="sequence variant" id="VAR_005073" description="In AGU; most frequent mutation; abolishes autocatalytic cleavage and enzyme activity; dbSNP:rs121964904." evidence="6 8 9">
    <original>C</original>
    <variation>S</variation>
    <location>
        <position position="163"/>
    </location>
</feature>
<feature type="sequence variant" id="VAR_015430" description="In AGU; dbSNP:rs386833433." evidence="1">
    <original>G</original>
    <variation>E</variation>
    <location>
        <position position="252"/>
    </location>
</feature>
<feature type="sequence variant" id="VAR_015431" description="In AGU; dbSNP:rs386833432." evidence="1">
    <original>G</original>
    <variation>R</variation>
    <location>
        <position position="252"/>
    </location>
</feature>
<feature type="sequence variant" id="VAR_015432" description="In AGU; dbSNP:rs386833434." evidence="1">
    <original>T</original>
    <variation>I</variation>
    <location>
        <position position="257"/>
    </location>
</feature>
<feature type="sequence variant" id="VAR_005074" description="In AGU; dbSNP:rs121964905." evidence="3">
    <original>G</original>
    <variation>R</variation>
    <location>
        <position position="302"/>
    </location>
</feature>
<feature type="sequence variant" id="VAR_005075" description="In AGU; dbSNP:rs121964906." evidence="3">
    <original>C</original>
    <variation>R</variation>
    <location>
        <position position="306"/>
    </location>
</feature>
<feature type="sequence variant" id="VAR_061026" description="In dbSNP:rs56849061.">
    <original>T</original>
    <variation>I</variation>
    <location>
        <position position="322"/>
    </location>
</feature>
<feature type="sequence conflict" description="In Ref. 4; AAB60655/CAA43958." evidence="16" ref="4">
    <original>V</original>
    <variation>A</variation>
    <location>
        <position position="21"/>
    </location>
</feature>
<feature type="sequence conflict" description="In Ref. 6; AA sequence." evidence="16" ref="6">
    <original>S</original>
    <variation>C</variation>
    <location>
        <position position="25"/>
    </location>
</feature>
<feature type="strand" evidence="20">
    <location>
        <begin position="28"/>
        <end position="35"/>
    </location>
</feature>
<feature type="helix" evidence="20">
    <location>
        <begin position="37"/>
        <end position="48"/>
    </location>
</feature>
<feature type="helix" evidence="20">
    <location>
        <begin position="53"/>
        <end position="67"/>
    </location>
</feature>
<feature type="helix" evidence="20">
    <location>
        <begin position="69"/>
        <end position="71"/>
    </location>
</feature>
<feature type="strand" evidence="20">
    <location>
        <begin position="72"/>
        <end position="77"/>
    </location>
</feature>
<feature type="strand" evidence="20">
    <location>
        <begin position="87"/>
        <end position="93"/>
    </location>
</feature>
<feature type="turn" evidence="20">
    <location>
        <begin position="94"/>
        <end position="96"/>
    </location>
</feature>
<feature type="strand" evidence="20">
    <location>
        <begin position="99"/>
        <end position="105"/>
    </location>
</feature>
<feature type="strand" evidence="21">
    <location>
        <begin position="107"/>
        <end position="109"/>
    </location>
</feature>
<feature type="helix" evidence="20">
    <location>
        <begin position="111"/>
        <end position="121"/>
    </location>
</feature>
<feature type="strand" evidence="20">
    <location>
        <begin position="125"/>
        <end position="128"/>
    </location>
</feature>
<feature type="helix" evidence="20">
    <location>
        <begin position="129"/>
        <end position="138"/>
    </location>
</feature>
<feature type="helix" evidence="20">
    <location>
        <begin position="149"/>
        <end position="160"/>
    </location>
</feature>
<feature type="turn" evidence="20">
    <location>
        <begin position="175"/>
        <end position="177"/>
    </location>
</feature>
<feature type="strand" evidence="20">
    <location>
        <begin position="207"/>
        <end position="212"/>
    </location>
</feature>
<feature type="strand" evidence="21">
    <location>
        <begin position="214"/>
        <end position="216"/>
    </location>
</feature>
<feature type="strand" evidence="20">
    <location>
        <begin position="218"/>
        <end position="224"/>
    </location>
</feature>
<feature type="turn" evidence="20">
    <location>
        <begin position="241"/>
        <end position="243"/>
    </location>
</feature>
<feature type="strand" evidence="20">
    <location>
        <begin position="244"/>
        <end position="248"/>
    </location>
</feature>
<feature type="turn" evidence="20">
    <location>
        <begin position="249"/>
        <end position="251"/>
    </location>
</feature>
<feature type="strand" evidence="20">
    <location>
        <begin position="252"/>
        <end position="258"/>
    </location>
</feature>
<feature type="helix" evidence="20">
    <location>
        <begin position="260"/>
        <end position="263"/>
    </location>
</feature>
<feature type="helix" evidence="20">
    <location>
        <begin position="264"/>
        <end position="266"/>
    </location>
</feature>
<feature type="helix" evidence="20">
    <location>
        <begin position="268"/>
        <end position="277"/>
    </location>
</feature>
<feature type="helix" evidence="20">
    <location>
        <begin position="282"/>
        <end position="296"/>
    </location>
</feature>
<feature type="strand" evidence="20">
    <location>
        <begin position="302"/>
        <end position="308"/>
    </location>
</feature>
<feature type="strand" evidence="20">
    <location>
        <begin position="313"/>
        <end position="318"/>
    </location>
</feature>
<feature type="strand" evidence="20">
    <location>
        <begin position="325"/>
        <end position="331"/>
    </location>
</feature>
<feature type="turn" evidence="21">
    <location>
        <begin position="333"/>
        <end position="335"/>
    </location>
</feature>
<feature type="strand" evidence="20">
    <location>
        <begin position="339"/>
        <end position="344"/>
    </location>
</feature>